<keyword id="KW-1185">Reference proteome</keyword>
<keyword id="KW-0687">Ribonucleoprotein</keyword>
<keyword id="KW-0689">Ribosomal protein</keyword>
<keyword id="KW-0694">RNA-binding</keyword>
<keyword id="KW-0699">rRNA-binding</keyword>
<sequence>MIIKEAKDAKRGRVHSRIRKKMEGTPERPRLNVYRSTNHLYVQVIDDSKGATLVAANTLEFGEAKEGKRPTGGNLSAAKQLGKAIAERAKQKGINKVVFDRGGYLYHGRIKALADAAREGGLEF</sequence>
<proteinExistence type="inferred from homology"/>
<evidence type="ECO:0000255" key="1">
    <source>
        <dbReference type="HAMAP-Rule" id="MF_01337"/>
    </source>
</evidence>
<evidence type="ECO:0000305" key="2"/>
<protein>
    <recommendedName>
        <fullName evidence="1">Large ribosomal subunit protein uL18</fullName>
    </recommendedName>
    <alternativeName>
        <fullName evidence="2">50S ribosomal protein L18</fullName>
    </alternativeName>
</protein>
<feature type="chain" id="PRO_0000251283" description="Large ribosomal subunit protein uL18">
    <location>
        <begin position="1"/>
        <end position="124"/>
    </location>
</feature>
<comment type="function">
    <text evidence="1">This is one of the proteins that bind and probably mediate the attachment of the 5S RNA into the large ribosomal subunit, where it forms part of the central protuberance.</text>
</comment>
<comment type="subunit">
    <text evidence="1">Part of the 50S ribosomal subunit; part of the 5S rRNA/L5/L18/L25 subcomplex. Contacts the 5S and 23S rRNAs.</text>
</comment>
<comment type="similarity">
    <text evidence="1">Belongs to the universal ribosomal protein uL18 family.</text>
</comment>
<organism>
    <name type="scientific">Koribacter versatilis (strain Ellin345)</name>
    <dbReference type="NCBI Taxonomy" id="204669"/>
    <lineage>
        <taxon>Bacteria</taxon>
        <taxon>Pseudomonadati</taxon>
        <taxon>Acidobacteriota</taxon>
        <taxon>Terriglobia</taxon>
        <taxon>Terriglobales</taxon>
        <taxon>Candidatus Korobacteraceae</taxon>
        <taxon>Candidatus Korobacter</taxon>
    </lineage>
</organism>
<reference key="1">
    <citation type="journal article" date="2009" name="Appl. Environ. Microbiol.">
        <title>Three genomes from the phylum Acidobacteria provide insight into the lifestyles of these microorganisms in soils.</title>
        <authorList>
            <person name="Ward N.L."/>
            <person name="Challacombe J.F."/>
            <person name="Janssen P.H."/>
            <person name="Henrissat B."/>
            <person name="Coutinho P.M."/>
            <person name="Wu M."/>
            <person name="Xie G."/>
            <person name="Haft D.H."/>
            <person name="Sait M."/>
            <person name="Badger J."/>
            <person name="Barabote R.D."/>
            <person name="Bradley B."/>
            <person name="Brettin T.S."/>
            <person name="Brinkac L.M."/>
            <person name="Bruce D."/>
            <person name="Creasy T."/>
            <person name="Daugherty S.C."/>
            <person name="Davidsen T.M."/>
            <person name="DeBoy R.T."/>
            <person name="Detter J.C."/>
            <person name="Dodson R.J."/>
            <person name="Durkin A.S."/>
            <person name="Ganapathy A."/>
            <person name="Gwinn-Giglio M."/>
            <person name="Han C.S."/>
            <person name="Khouri H."/>
            <person name="Kiss H."/>
            <person name="Kothari S.P."/>
            <person name="Madupu R."/>
            <person name="Nelson K.E."/>
            <person name="Nelson W.C."/>
            <person name="Paulsen I."/>
            <person name="Penn K."/>
            <person name="Ren Q."/>
            <person name="Rosovitz M.J."/>
            <person name="Selengut J.D."/>
            <person name="Shrivastava S."/>
            <person name="Sullivan S.A."/>
            <person name="Tapia R."/>
            <person name="Thompson L.S."/>
            <person name="Watkins K.L."/>
            <person name="Yang Q."/>
            <person name="Yu C."/>
            <person name="Zafar N."/>
            <person name="Zhou L."/>
            <person name="Kuske C.R."/>
        </authorList>
    </citation>
    <scope>NUCLEOTIDE SEQUENCE [LARGE SCALE GENOMIC DNA]</scope>
    <source>
        <strain>Ellin345</strain>
    </source>
</reference>
<gene>
    <name evidence="1" type="primary">rplR</name>
    <name type="ordered locus">Acid345_1242</name>
</gene>
<name>RL18_KORVE</name>
<dbReference type="EMBL" id="CP000360">
    <property type="protein sequence ID" value="ABF40244.1"/>
    <property type="molecule type" value="Genomic_DNA"/>
</dbReference>
<dbReference type="RefSeq" id="WP_011522046.1">
    <property type="nucleotide sequence ID" value="NC_008009.1"/>
</dbReference>
<dbReference type="SMR" id="Q1ISA6"/>
<dbReference type="STRING" id="204669.Acid345_1242"/>
<dbReference type="EnsemblBacteria" id="ABF40244">
    <property type="protein sequence ID" value="ABF40244"/>
    <property type="gene ID" value="Acid345_1242"/>
</dbReference>
<dbReference type="KEGG" id="aba:Acid345_1242"/>
<dbReference type="eggNOG" id="COG0256">
    <property type="taxonomic scope" value="Bacteria"/>
</dbReference>
<dbReference type="HOGENOM" id="CLU_098841_0_1_0"/>
<dbReference type="OrthoDB" id="9810939at2"/>
<dbReference type="Proteomes" id="UP000002432">
    <property type="component" value="Chromosome"/>
</dbReference>
<dbReference type="GO" id="GO:0022625">
    <property type="term" value="C:cytosolic large ribosomal subunit"/>
    <property type="evidence" value="ECO:0007669"/>
    <property type="project" value="TreeGrafter"/>
</dbReference>
<dbReference type="GO" id="GO:0008097">
    <property type="term" value="F:5S rRNA binding"/>
    <property type="evidence" value="ECO:0007669"/>
    <property type="project" value="TreeGrafter"/>
</dbReference>
<dbReference type="GO" id="GO:0003735">
    <property type="term" value="F:structural constituent of ribosome"/>
    <property type="evidence" value="ECO:0007669"/>
    <property type="project" value="InterPro"/>
</dbReference>
<dbReference type="GO" id="GO:0006412">
    <property type="term" value="P:translation"/>
    <property type="evidence" value="ECO:0007669"/>
    <property type="project" value="UniProtKB-UniRule"/>
</dbReference>
<dbReference type="CDD" id="cd00432">
    <property type="entry name" value="Ribosomal_L18_L5e"/>
    <property type="match status" value="1"/>
</dbReference>
<dbReference type="FunFam" id="3.30.420.100:FF:000001">
    <property type="entry name" value="50S ribosomal protein L18"/>
    <property type="match status" value="1"/>
</dbReference>
<dbReference type="Gene3D" id="3.30.420.100">
    <property type="match status" value="1"/>
</dbReference>
<dbReference type="HAMAP" id="MF_01337_B">
    <property type="entry name" value="Ribosomal_uL18_B"/>
    <property type="match status" value="1"/>
</dbReference>
<dbReference type="InterPro" id="IPR004389">
    <property type="entry name" value="Ribosomal_uL18_bac-type"/>
</dbReference>
<dbReference type="InterPro" id="IPR005484">
    <property type="entry name" value="Ribosomal_uL18_bac/euk"/>
</dbReference>
<dbReference type="NCBIfam" id="TIGR00060">
    <property type="entry name" value="L18_bact"/>
    <property type="match status" value="1"/>
</dbReference>
<dbReference type="PANTHER" id="PTHR12899">
    <property type="entry name" value="39S RIBOSOMAL PROTEIN L18, MITOCHONDRIAL"/>
    <property type="match status" value="1"/>
</dbReference>
<dbReference type="PANTHER" id="PTHR12899:SF3">
    <property type="entry name" value="LARGE RIBOSOMAL SUBUNIT PROTEIN UL18M"/>
    <property type="match status" value="1"/>
</dbReference>
<dbReference type="Pfam" id="PF00861">
    <property type="entry name" value="Ribosomal_L18p"/>
    <property type="match status" value="1"/>
</dbReference>
<dbReference type="SUPFAM" id="SSF53137">
    <property type="entry name" value="Translational machinery components"/>
    <property type="match status" value="1"/>
</dbReference>
<accession>Q1ISA6</accession>